<dbReference type="EMBL" id="DQ897681">
    <property type="protein sequence ID" value="ABI17295.1"/>
    <property type="molecule type" value="Genomic_DNA"/>
</dbReference>
<dbReference type="EMBL" id="DQ897681">
    <property type="protein sequence ID" value="ABI17345.1"/>
    <property type="molecule type" value="Genomic_DNA"/>
</dbReference>
<dbReference type="RefSeq" id="YP_784103.1">
    <property type="nucleotide sequence ID" value="NC_008454.1"/>
</dbReference>
<dbReference type="RefSeq" id="YP_784153.1">
    <property type="nucleotide sequence ID" value="NC_008454.1"/>
</dbReference>
<dbReference type="SMR" id="Q06FM8"/>
<dbReference type="GeneID" id="4362833"/>
<dbReference type="GeneID" id="4362859"/>
<dbReference type="GO" id="GO:0009507">
    <property type="term" value="C:chloroplast"/>
    <property type="evidence" value="ECO:0007669"/>
    <property type="project" value="UniProtKB-SubCell"/>
</dbReference>
<dbReference type="GO" id="GO:0022625">
    <property type="term" value="C:cytosolic large ribosomal subunit"/>
    <property type="evidence" value="ECO:0007669"/>
    <property type="project" value="TreeGrafter"/>
</dbReference>
<dbReference type="GO" id="GO:0070180">
    <property type="term" value="F:large ribosomal subunit rRNA binding"/>
    <property type="evidence" value="ECO:0007669"/>
    <property type="project" value="TreeGrafter"/>
</dbReference>
<dbReference type="GO" id="GO:0003735">
    <property type="term" value="F:structural constituent of ribosome"/>
    <property type="evidence" value="ECO:0007669"/>
    <property type="project" value="InterPro"/>
</dbReference>
<dbReference type="GO" id="GO:0006412">
    <property type="term" value="P:translation"/>
    <property type="evidence" value="ECO:0007669"/>
    <property type="project" value="UniProtKB-UniRule"/>
</dbReference>
<dbReference type="CDD" id="cd00337">
    <property type="entry name" value="Ribosomal_uL14"/>
    <property type="match status" value="1"/>
</dbReference>
<dbReference type="Gene3D" id="2.40.150.20">
    <property type="entry name" value="Ribosomal protein L14"/>
    <property type="match status" value="1"/>
</dbReference>
<dbReference type="HAMAP" id="MF_01367">
    <property type="entry name" value="Ribosomal_uL14"/>
    <property type="match status" value="1"/>
</dbReference>
<dbReference type="InterPro" id="IPR000218">
    <property type="entry name" value="Ribosomal_uL14"/>
</dbReference>
<dbReference type="InterPro" id="IPR005745">
    <property type="entry name" value="Ribosomal_uL14_bac-type"/>
</dbReference>
<dbReference type="InterPro" id="IPR019972">
    <property type="entry name" value="Ribosomal_uL14_CS"/>
</dbReference>
<dbReference type="InterPro" id="IPR036853">
    <property type="entry name" value="Ribosomal_uL14_sf"/>
</dbReference>
<dbReference type="NCBIfam" id="TIGR01067">
    <property type="entry name" value="rplN_bact"/>
    <property type="match status" value="1"/>
</dbReference>
<dbReference type="PANTHER" id="PTHR11761">
    <property type="entry name" value="50S/60S RIBOSOMAL PROTEIN L14/L23"/>
    <property type="match status" value="1"/>
</dbReference>
<dbReference type="PANTHER" id="PTHR11761:SF3">
    <property type="entry name" value="LARGE RIBOSOMAL SUBUNIT PROTEIN UL14M"/>
    <property type="match status" value="1"/>
</dbReference>
<dbReference type="Pfam" id="PF00238">
    <property type="entry name" value="Ribosomal_L14"/>
    <property type="match status" value="1"/>
</dbReference>
<dbReference type="SMART" id="SM01374">
    <property type="entry name" value="Ribosomal_L14"/>
    <property type="match status" value="1"/>
</dbReference>
<dbReference type="SUPFAM" id="SSF50193">
    <property type="entry name" value="Ribosomal protein L14"/>
    <property type="match status" value="1"/>
</dbReference>
<dbReference type="PROSITE" id="PS00049">
    <property type="entry name" value="RIBOSOMAL_L14"/>
    <property type="match status" value="1"/>
</dbReference>
<geneLocation type="chloroplast"/>
<reference key="1">
    <citation type="journal article" date="2006" name="Mol. Biol. Evol.">
        <title>The complete chloroplast genome sequence of Pelargonium x hortorum: organization and evolution of the largest and most highly rearranged chloroplast genome of land plants.</title>
        <authorList>
            <person name="Chumley T.W."/>
            <person name="Palmer J.D."/>
            <person name="Mower J.P."/>
            <person name="Fourcade H.M."/>
            <person name="Calie P.J."/>
            <person name="Boore J.L."/>
            <person name="Jansen R.K."/>
        </authorList>
    </citation>
    <scope>NUCLEOTIDE SEQUENCE [LARGE SCALE GENOMIC DNA]</scope>
    <source>
        <strain>cv. Ringo White</strain>
    </source>
</reference>
<accession>Q06FM8</accession>
<gene>
    <name evidence="1" type="primary">rpl14</name>
</gene>
<sequence length="121" mass="13392">MIQSQTLLNVADNSGARKLMCIRIVGASNQRYAHIGDVIVAVIKEAKPTSALKRSEVIKAVIVRTCKEFKCDDGMIIRYDDNAAVVINKDRNPVGTRIFGAIPLELHQNFDKIVSLAREVI</sequence>
<name>RK14_PELHO</name>
<comment type="function">
    <text evidence="1">Binds to 23S rRNA.</text>
</comment>
<comment type="subunit">
    <text evidence="1">Part of the 50S ribosomal subunit.</text>
</comment>
<comment type="subcellular location">
    <subcellularLocation>
        <location>Plastid</location>
        <location>Chloroplast</location>
    </subcellularLocation>
</comment>
<comment type="similarity">
    <text evidence="1">Belongs to the universal ribosomal protein uL14 family.</text>
</comment>
<keyword id="KW-0150">Chloroplast</keyword>
<keyword id="KW-0934">Plastid</keyword>
<keyword id="KW-0687">Ribonucleoprotein</keyword>
<keyword id="KW-0689">Ribosomal protein</keyword>
<keyword id="KW-0694">RNA-binding</keyword>
<keyword id="KW-0699">rRNA-binding</keyword>
<proteinExistence type="inferred from homology"/>
<protein>
    <recommendedName>
        <fullName evidence="1">Large ribosomal subunit protein uL14c</fullName>
    </recommendedName>
    <alternativeName>
        <fullName evidence="2">50S ribosomal protein L14, chloroplastic</fullName>
    </alternativeName>
</protein>
<organism>
    <name type="scientific">Pelargonium hortorum</name>
    <name type="common">Common geranium</name>
    <name type="synonym">Pelargonium inquinans x Pelargonium zonale</name>
    <dbReference type="NCBI Taxonomy" id="4031"/>
    <lineage>
        <taxon>Eukaryota</taxon>
        <taxon>Viridiplantae</taxon>
        <taxon>Streptophyta</taxon>
        <taxon>Embryophyta</taxon>
        <taxon>Tracheophyta</taxon>
        <taxon>Spermatophyta</taxon>
        <taxon>Magnoliopsida</taxon>
        <taxon>eudicotyledons</taxon>
        <taxon>Gunneridae</taxon>
        <taxon>Pentapetalae</taxon>
        <taxon>rosids</taxon>
        <taxon>malvids</taxon>
        <taxon>Geraniales</taxon>
        <taxon>Geraniaceae</taxon>
        <taxon>Pelargonium</taxon>
    </lineage>
</organism>
<evidence type="ECO:0000255" key="1">
    <source>
        <dbReference type="HAMAP-Rule" id="MF_01367"/>
    </source>
</evidence>
<evidence type="ECO:0000305" key="2"/>
<feature type="chain" id="PRO_0000355899" description="Large ribosomal subunit protein uL14c">
    <location>
        <begin position="1"/>
        <end position="121"/>
    </location>
</feature>